<proteinExistence type="inferred from homology"/>
<evidence type="ECO:0000255" key="1">
    <source>
        <dbReference type="HAMAP-Rule" id="MF_00110"/>
    </source>
</evidence>
<comment type="function">
    <text evidence="1">Catalyzes the conversion of 3-deoxy-D-arabino-heptulosonate 7-phosphate (DAHP) to dehydroquinate (DHQ).</text>
</comment>
<comment type="catalytic activity">
    <reaction evidence="1">
        <text>7-phospho-2-dehydro-3-deoxy-D-arabino-heptonate = 3-dehydroquinate + phosphate</text>
        <dbReference type="Rhea" id="RHEA:21968"/>
        <dbReference type="ChEBI" id="CHEBI:32364"/>
        <dbReference type="ChEBI" id="CHEBI:43474"/>
        <dbReference type="ChEBI" id="CHEBI:58394"/>
        <dbReference type="EC" id="4.2.3.4"/>
    </reaction>
</comment>
<comment type="cofactor">
    <cofactor evidence="1">
        <name>NAD(+)</name>
        <dbReference type="ChEBI" id="CHEBI:57540"/>
    </cofactor>
</comment>
<comment type="cofactor">
    <cofactor evidence="1">
        <name>Co(2+)</name>
        <dbReference type="ChEBI" id="CHEBI:48828"/>
    </cofactor>
    <cofactor evidence="1">
        <name>Zn(2+)</name>
        <dbReference type="ChEBI" id="CHEBI:29105"/>
    </cofactor>
    <text evidence="1">Binds 1 divalent metal cation per subunit. Can use either Co(2+) or Zn(2+).</text>
</comment>
<comment type="pathway">
    <text evidence="1">Metabolic intermediate biosynthesis; chorismate biosynthesis; chorismate from D-erythrose 4-phosphate and phosphoenolpyruvate: step 2/7.</text>
</comment>
<comment type="subcellular location">
    <subcellularLocation>
        <location evidence="1">Cytoplasm</location>
    </subcellularLocation>
</comment>
<comment type="similarity">
    <text evidence="1">Belongs to the sugar phosphate cyclases superfamily. Dehydroquinate synthase family.</text>
</comment>
<keyword id="KW-0028">Amino-acid biosynthesis</keyword>
<keyword id="KW-0057">Aromatic amino acid biosynthesis</keyword>
<keyword id="KW-0170">Cobalt</keyword>
<keyword id="KW-0963">Cytoplasm</keyword>
<keyword id="KW-0456">Lyase</keyword>
<keyword id="KW-0479">Metal-binding</keyword>
<keyword id="KW-0520">NAD</keyword>
<keyword id="KW-0547">Nucleotide-binding</keyword>
<keyword id="KW-1185">Reference proteome</keyword>
<keyword id="KW-0862">Zinc</keyword>
<feature type="chain" id="PRO_0000140822" description="3-dehydroquinate synthase">
    <location>
        <begin position="1"/>
        <end position="354"/>
    </location>
</feature>
<feature type="binding site" evidence="1">
    <location>
        <begin position="61"/>
        <end position="66"/>
    </location>
    <ligand>
        <name>NAD(+)</name>
        <dbReference type="ChEBI" id="CHEBI:57540"/>
    </ligand>
</feature>
<feature type="binding site" evidence="1">
    <location>
        <begin position="119"/>
        <end position="120"/>
    </location>
    <ligand>
        <name>NAD(+)</name>
        <dbReference type="ChEBI" id="CHEBI:57540"/>
    </ligand>
</feature>
<feature type="binding site" evidence="1">
    <location>
        <position position="132"/>
    </location>
    <ligand>
        <name>NAD(+)</name>
        <dbReference type="ChEBI" id="CHEBI:57540"/>
    </ligand>
</feature>
<feature type="binding site" evidence="1">
    <location>
        <position position="141"/>
    </location>
    <ligand>
        <name>NAD(+)</name>
        <dbReference type="ChEBI" id="CHEBI:57540"/>
    </ligand>
</feature>
<feature type="binding site" evidence="1">
    <location>
        <begin position="159"/>
        <end position="162"/>
    </location>
    <ligand>
        <name>NAD(+)</name>
        <dbReference type="ChEBI" id="CHEBI:57540"/>
    </ligand>
</feature>
<feature type="binding site" evidence="1">
    <location>
        <position position="174"/>
    </location>
    <ligand>
        <name>Zn(2+)</name>
        <dbReference type="ChEBI" id="CHEBI:29105"/>
    </ligand>
</feature>
<feature type="binding site" evidence="1">
    <location>
        <position position="238"/>
    </location>
    <ligand>
        <name>Zn(2+)</name>
        <dbReference type="ChEBI" id="CHEBI:29105"/>
    </ligand>
</feature>
<feature type="binding site" evidence="1">
    <location>
        <position position="254"/>
    </location>
    <ligand>
        <name>Zn(2+)</name>
        <dbReference type="ChEBI" id="CHEBI:29105"/>
    </ligand>
</feature>
<accession>Q980I9</accession>
<gene>
    <name evidence="1" type="primary">aroB</name>
    <name type="ordered locus">SSO0305</name>
</gene>
<protein>
    <recommendedName>
        <fullName evidence="1">3-dehydroquinate synthase</fullName>
        <shortName evidence="1">DHQS</shortName>
        <ecNumber evidence="1">4.2.3.4</ecNumber>
    </recommendedName>
</protein>
<reference key="1">
    <citation type="journal article" date="2001" name="Proc. Natl. Acad. Sci. U.S.A.">
        <title>The complete genome of the crenarchaeon Sulfolobus solfataricus P2.</title>
        <authorList>
            <person name="She Q."/>
            <person name="Singh R.K."/>
            <person name="Confalonieri F."/>
            <person name="Zivanovic Y."/>
            <person name="Allard G."/>
            <person name="Awayez M.J."/>
            <person name="Chan-Weiher C.C.-Y."/>
            <person name="Clausen I.G."/>
            <person name="Curtis B.A."/>
            <person name="De Moors A."/>
            <person name="Erauso G."/>
            <person name="Fletcher C."/>
            <person name="Gordon P.M.K."/>
            <person name="Heikamp-de Jong I."/>
            <person name="Jeffries A.C."/>
            <person name="Kozera C.J."/>
            <person name="Medina N."/>
            <person name="Peng X."/>
            <person name="Thi-Ngoc H.P."/>
            <person name="Redder P."/>
            <person name="Schenk M.E."/>
            <person name="Theriault C."/>
            <person name="Tolstrup N."/>
            <person name="Charlebois R.L."/>
            <person name="Doolittle W.F."/>
            <person name="Duguet M."/>
            <person name="Gaasterland T."/>
            <person name="Garrett R.A."/>
            <person name="Ragan M.A."/>
            <person name="Sensen C.W."/>
            <person name="Van der Oost J."/>
        </authorList>
    </citation>
    <scope>NUCLEOTIDE SEQUENCE [LARGE SCALE GENOMIC DNA]</scope>
    <source>
        <strain>ATCC 35092 / DSM 1617 / JCM 11322 / P2</strain>
    </source>
</reference>
<organism>
    <name type="scientific">Saccharolobus solfataricus (strain ATCC 35092 / DSM 1617 / JCM 11322 / P2)</name>
    <name type="common">Sulfolobus solfataricus</name>
    <dbReference type="NCBI Taxonomy" id="273057"/>
    <lineage>
        <taxon>Archaea</taxon>
        <taxon>Thermoproteota</taxon>
        <taxon>Thermoprotei</taxon>
        <taxon>Sulfolobales</taxon>
        <taxon>Sulfolobaceae</taxon>
        <taxon>Saccharolobus</taxon>
    </lineage>
</organism>
<sequence>MREILEDICCSEVRVVVGEGSLSKLSKIKDNNAAVIYSRKISIADKINKYLPNAYFIPINDGESTKELSSVISLVEKLFEKNFDRGDYIIGVGGGTVTDVAGFLASIYLRGLNLINVPTTFLGMVDAAIGGKNGVNFNNIKNLIGTFYQPSMIISDLEFLETLPIEELKKGLAEVIKYGLTLDKELYDYLSLNKEKILNKDKQALEDIIFRSTLDKLSIVKEDERETKGIRIVLNFGHTIGHAIEAGSSFNVPHGYAISVGMVCEAKMAEELGYAEEGVVEDVLWLLQIYGLPYDISQIDAPVDLKLALNAINMDKKHRKDVILIPFPTRIGSWKKVEVPLDTVKGFAEQCLKK</sequence>
<name>AROB_SACS2</name>
<dbReference type="EC" id="4.2.3.4" evidence="1"/>
<dbReference type="EMBL" id="AE006641">
    <property type="protein sequence ID" value="AAK40642.1"/>
    <property type="molecule type" value="Genomic_DNA"/>
</dbReference>
<dbReference type="PIR" id="C90173">
    <property type="entry name" value="C90173"/>
</dbReference>
<dbReference type="RefSeq" id="WP_009990597.1">
    <property type="nucleotide sequence ID" value="NC_002754.1"/>
</dbReference>
<dbReference type="SMR" id="Q980I9"/>
<dbReference type="FunCoup" id="Q980I9">
    <property type="interactions" value="215"/>
</dbReference>
<dbReference type="STRING" id="273057.SSO0305"/>
<dbReference type="PaxDb" id="273057-SSO0305"/>
<dbReference type="EnsemblBacteria" id="AAK40642">
    <property type="protein sequence ID" value="AAK40642"/>
    <property type="gene ID" value="SSO0305"/>
</dbReference>
<dbReference type="GeneID" id="44129278"/>
<dbReference type="KEGG" id="sso:SSO0305"/>
<dbReference type="PATRIC" id="fig|273057.12.peg.298"/>
<dbReference type="eggNOG" id="arCOG00983">
    <property type="taxonomic scope" value="Archaea"/>
</dbReference>
<dbReference type="HOGENOM" id="CLU_001201_0_1_2"/>
<dbReference type="InParanoid" id="Q980I9"/>
<dbReference type="PhylomeDB" id="Q980I9"/>
<dbReference type="UniPathway" id="UPA00053">
    <property type="reaction ID" value="UER00085"/>
</dbReference>
<dbReference type="Proteomes" id="UP000001974">
    <property type="component" value="Chromosome"/>
</dbReference>
<dbReference type="GO" id="GO:0005737">
    <property type="term" value="C:cytoplasm"/>
    <property type="evidence" value="ECO:0007669"/>
    <property type="project" value="UniProtKB-SubCell"/>
</dbReference>
<dbReference type="GO" id="GO:0003856">
    <property type="term" value="F:3-dehydroquinate synthase activity"/>
    <property type="evidence" value="ECO:0000318"/>
    <property type="project" value="GO_Central"/>
</dbReference>
<dbReference type="GO" id="GO:0046872">
    <property type="term" value="F:metal ion binding"/>
    <property type="evidence" value="ECO:0007669"/>
    <property type="project" value="UniProtKB-KW"/>
</dbReference>
<dbReference type="GO" id="GO:0000166">
    <property type="term" value="F:nucleotide binding"/>
    <property type="evidence" value="ECO:0007669"/>
    <property type="project" value="UniProtKB-KW"/>
</dbReference>
<dbReference type="GO" id="GO:0008652">
    <property type="term" value="P:amino acid biosynthetic process"/>
    <property type="evidence" value="ECO:0007669"/>
    <property type="project" value="UniProtKB-KW"/>
</dbReference>
<dbReference type="GO" id="GO:0009073">
    <property type="term" value="P:aromatic amino acid family biosynthetic process"/>
    <property type="evidence" value="ECO:0007669"/>
    <property type="project" value="UniProtKB-KW"/>
</dbReference>
<dbReference type="GO" id="GO:0009423">
    <property type="term" value="P:chorismate biosynthetic process"/>
    <property type="evidence" value="ECO:0007669"/>
    <property type="project" value="UniProtKB-UniRule"/>
</dbReference>
<dbReference type="CDD" id="cd08195">
    <property type="entry name" value="DHQS"/>
    <property type="match status" value="1"/>
</dbReference>
<dbReference type="FunFam" id="1.20.1090.10:FF:000038">
    <property type="entry name" value="3-dehydroquinate synthase"/>
    <property type="match status" value="1"/>
</dbReference>
<dbReference type="Gene3D" id="3.40.50.1970">
    <property type="match status" value="1"/>
</dbReference>
<dbReference type="Gene3D" id="1.20.1090.10">
    <property type="entry name" value="Dehydroquinate synthase-like - alpha domain"/>
    <property type="match status" value="1"/>
</dbReference>
<dbReference type="HAMAP" id="MF_00110">
    <property type="entry name" value="DHQ_synthase"/>
    <property type="match status" value="1"/>
</dbReference>
<dbReference type="InterPro" id="IPR050071">
    <property type="entry name" value="Dehydroquinate_synthase"/>
</dbReference>
<dbReference type="InterPro" id="IPR016037">
    <property type="entry name" value="DHQ_synth_AroB"/>
</dbReference>
<dbReference type="InterPro" id="IPR030963">
    <property type="entry name" value="DHQ_synth_fam"/>
</dbReference>
<dbReference type="InterPro" id="IPR030960">
    <property type="entry name" value="DHQS/DOIS_N"/>
</dbReference>
<dbReference type="InterPro" id="IPR056179">
    <property type="entry name" value="DHQS_C"/>
</dbReference>
<dbReference type="NCBIfam" id="TIGR01357">
    <property type="entry name" value="aroB"/>
    <property type="match status" value="1"/>
</dbReference>
<dbReference type="PANTHER" id="PTHR43622">
    <property type="entry name" value="3-DEHYDROQUINATE SYNTHASE"/>
    <property type="match status" value="1"/>
</dbReference>
<dbReference type="PANTHER" id="PTHR43622:SF1">
    <property type="entry name" value="3-DEHYDROQUINATE SYNTHASE"/>
    <property type="match status" value="1"/>
</dbReference>
<dbReference type="Pfam" id="PF01761">
    <property type="entry name" value="DHQ_synthase"/>
    <property type="match status" value="1"/>
</dbReference>
<dbReference type="Pfam" id="PF24621">
    <property type="entry name" value="DHQS_C"/>
    <property type="match status" value="1"/>
</dbReference>
<dbReference type="PIRSF" id="PIRSF001455">
    <property type="entry name" value="DHQ_synth"/>
    <property type="match status" value="1"/>
</dbReference>
<dbReference type="SUPFAM" id="SSF56796">
    <property type="entry name" value="Dehydroquinate synthase-like"/>
    <property type="match status" value="1"/>
</dbReference>